<dbReference type="EC" id="2.7.13.3"/>
<dbReference type="EMBL" id="AE008918">
    <property type="protein sequence ID" value="AAL53921.1"/>
    <property type="molecule type" value="Genomic_DNA"/>
</dbReference>
<dbReference type="PIR" id="AF3594">
    <property type="entry name" value="AF3594"/>
</dbReference>
<dbReference type="RefSeq" id="WP_002971240.1">
    <property type="nucleotide sequence ID" value="NZ_GG703779.1"/>
</dbReference>
<dbReference type="PDB" id="3T50">
    <property type="method" value="X-ray"/>
    <property type="resolution" value="1.64 A"/>
    <property type="chains" value="A/B=28-139"/>
</dbReference>
<dbReference type="PDB" id="6PH2">
    <property type="method" value="X-ray"/>
    <property type="resolution" value="2.34 A"/>
    <property type="chains" value="A/B/C/D=15-155"/>
</dbReference>
<dbReference type="PDB" id="6PH3">
    <property type="method" value="X-ray"/>
    <property type="resolution" value="2.74 A"/>
    <property type="chains" value="A/B/C/D=15-273"/>
</dbReference>
<dbReference type="PDB" id="6PH4">
    <property type="method" value="X-ray"/>
    <property type="resolution" value="3.25 A"/>
    <property type="chains" value="A/B=15-489"/>
</dbReference>
<dbReference type="PDBsum" id="3T50"/>
<dbReference type="PDBsum" id="6PH2"/>
<dbReference type="PDBsum" id="6PH3"/>
<dbReference type="PDBsum" id="6PH4"/>
<dbReference type="SMR" id="Q8YC53"/>
<dbReference type="KEGG" id="bme:BMEII0679"/>
<dbReference type="KEGG" id="bmel:DK63_2563"/>
<dbReference type="PATRIC" id="fig|224914.52.peg.2686"/>
<dbReference type="eggNOG" id="COG2202">
    <property type="taxonomic scope" value="Bacteria"/>
</dbReference>
<dbReference type="eggNOG" id="COG3920">
    <property type="taxonomic scope" value="Bacteria"/>
</dbReference>
<dbReference type="BRENDA" id="2.7.13.3">
    <property type="organism ID" value="995"/>
</dbReference>
<dbReference type="EvolutionaryTrace" id="Q8YC53"/>
<dbReference type="PHI-base" id="PHI:3169"/>
<dbReference type="Proteomes" id="UP000000419">
    <property type="component" value="Chromosome II"/>
</dbReference>
<dbReference type="GO" id="GO:0005524">
    <property type="term" value="F:ATP binding"/>
    <property type="evidence" value="ECO:0007669"/>
    <property type="project" value="UniProtKB-KW"/>
</dbReference>
<dbReference type="GO" id="GO:0009881">
    <property type="term" value="F:photoreceptor activity"/>
    <property type="evidence" value="ECO:0007669"/>
    <property type="project" value="UniProtKB-KW"/>
</dbReference>
<dbReference type="GO" id="GO:0004673">
    <property type="term" value="F:protein histidine kinase activity"/>
    <property type="evidence" value="ECO:0007669"/>
    <property type="project" value="UniProtKB-EC"/>
</dbReference>
<dbReference type="CDD" id="cd00130">
    <property type="entry name" value="PAS"/>
    <property type="match status" value="2"/>
</dbReference>
<dbReference type="Gene3D" id="2.10.70.100">
    <property type="match status" value="1"/>
</dbReference>
<dbReference type="Gene3D" id="3.30.450.20">
    <property type="entry name" value="PAS domain"/>
    <property type="match status" value="2"/>
</dbReference>
<dbReference type="InterPro" id="IPR001610">
    <property type="entry name" value="PAC"/>
</dbReference>
<dbReference type="InterPro" id="IPR000014">
    <property type="entry name" value="PAS"/>
</dbReference>
<dbReference type="InterPro" id="IPR000700">
    <property type="entry name" value="PAS-assoc_C"/>
</dbReference>
<dbReference type="InterPro" id="IPR035965">
    <property type="entry name" value="PAS-like_dom_sf"/>
</dbReference>
<dbReference type="InterPro" id="IPR013655">
    <property type="entry name" value="PAS_fold_3"/>
</dbReference>
<dbReference type="InterPro" id="IPR011102">
    <property type="entry name" value="Sig_transdc_His_kinase_HWE"/>
</dbReference>
<dbReference type="NCBIfam" id="TIGR00229">
    <property type="entry name" value="sensory_box"/>
    <property type="match status" value="2"/>
</dbReference>
<dbReference type="PANTHER" id="PTHR41523:SF7">
    <property type="entry name" value="HISTIDINE KINASE"/>
    <property type="match status" value="1"/>
</dbReference>
<dbReference type="PANTHER" id="PTHR41523">
    <property type="entry name" value="TWO-COMPONENT SYSTEM SENSOR PROTEIN"/>
    <property type="match status" value="1"/>
</dbReference>
<dbReference type="Pfam" id="PF07536">
    <property type="entry name" value="HWE_HK"/>
    <property type="match status" value="1"/>
</dbReference>
<dbReference type="Pfam" id="PF08447">
    <property type="entry name" value="PAS_3"/>
    <property type="match status" value="1"/>
</dbReference>
<dbReference type="Pfam" id="PF13426">
    <property type="entry name" value="PAS_9"/>
    <property type="match status" value="1"/>
</dbReference>
<dbReference type="SMART" id="SM00911">
    <property type="entry name" value="HWE_HK"/>
    <property type="match status" value="1"/>
</dbReference>
<dbReference type="SMART" id="SM00086">
    <property type="entry name" value="PAC"/>
    <property type="match status" value="2"/>
</dbReference>
<dbReference type="SMART" id="SM00091">
    <property type="entry name" value="PAS"/>
    <property type="match status" value="2"/>
</dbReference>
<dbReference type="SUPFAM" id="SSF55785">
    <property type="entry name" value="PYP-like sensor domain (PAS domain)"/>
    <property type="match status" value="2"/>
</dbReference>
<dbReference type="PROSITE" id="PS50113">
    <property type="entry name" value="PAC"/>
    <property type="match status" value="2"/>
</dbReference>
<dbReference type="PROSITE" id="PS50112">
    <property type="entry name" value="PAS"/>
    <property type="match status" value="1"/>
</dbReference>
<organism>
    <name type="scientific">Brucella melitensis biotype 1 (strain ATCC 23456 / CCUG 17765 / NCTC 10094 / 16M)</name>
    <dbReference type="NCBI Taxonomy" id="224914"/>
    <lineage>
        <taxon>Bacteria</taxon>
        <taxon>Pseudomonadati</taxon>
        <taxon>Pseudomonadota</taxon>
        <taxon>Alphaproteobacteria</taxon>
        <taxon>Hyphomicrobiales</taxon>
        <taxon>Brucellaceae</taxon>
        <taxon>Brucella/Ochrobactrum group</taxon>
        <taxon>Brucella</taxon>
    </lineage>
</organism>
<gene>
    <name type="ordered locus">BMEII0679</name>
</gene>
<evidence type="ECO:0000250" key="1"/>
<evidence type="ECO:0000255" key="2">
    <source>
        <dbReference type="PROSITE-ProRule" id="PRU00140"/>
    </source>
</evidence>
<evidence type="ECO:0000255" key="3">
    <source>
        <dbReference type="PROSITE-ProRule" id="PRU00141"/>
    </source>
</evidence>
<evidence type="ECO:0000269" key="4">
    <source>
    </source>
</evidence>
<evidence type="ECO:0007829" key="5">
    <source>
        <dbReference type="PDB" id="3T50"/>
    </source>
</evidence>
<evidence type="ECO:0007829" key="6">
    <source>
        <dbReference type="PDB" id="6PH2"/>
    </source>
</evidence>
<evidence type="ECO:0007829" key="7">
    <source>
        <dbReference type="PDB" id="6PH3"/>
    </source>
</evidence>
<evidence type="ECO:0007829" key="8">
    <source>
        <dbReference type="PDB" id="6PH4"/>
    </source>
</evidence>
<sequence length="489" mass="54874">MAIDLRPFIPFGRGALSQATDPFRAAVEFTLMPMLITNPHLPDNPIVFANPAFLKLTGYEADEVMGRNCRFLQGHGTDPAHVRAIKSAIAAEKPIDIDIINYKKSGEAFWNRLHISPVHNANGRLQHFVSSQLDVTLELSRLVELEKERKTLSIETARSKDQLDYIVEVANIGFWTREFYSGKMTCSAECRRIYGFTPDEPVHFDTILDLVVLEDRMTVVQKAHQAVTGEPYSIEYRIVTRLGETRWLETRAKALTGENPLVLGIVQDVTERKKAEANKALVSREIAHRFKNSMAMVQSIANQTLRNTYDPEQANRLFSERLRALSQAHDMLLKENWAGATIQQICATALAPFNSTFANRIHMSGPHLLVSDRVTVALSLAFYELATNAVKYGALSNEKGVINITWAIMEDKGEKKFHMRWAESRGPEVMQPARRGFGQRLLHSVLAEELKAKCDVEFAASGLLIDVLAPITPEVFPGMGHNVPEQRIA</sequence>
<accession>Q8YC53</accession>
<reference key="1">
    <citation type="journal article" date="2002" name="Proc. Natl. Acad. Sci. U.S.A.">
        <title>The genome sequence of the facultative intracellular pathogen Brucella melitensis.</title>
        <authorList>
            <person name="DelVecchio V.G."/>
            <person name="Kapatral V."/>
            <person name="Redkar R.J."/>
            <person name="Patra G."/>
            <person name="Mujer C."/>
            <person name="Los T."/>
            <person name="Ivanova N."/>
            <person name="Anderson I."/>
            <person name="Bhattacharyya A."/>
            <person name="Lykidis A."/>
            <person name="Reznik G."/>
            <person name="Jablonski L."/>
            <person name="Larsen N."/>
            <person name="D'Souza M."/>
            <person name="Bernal A."/>
            <person name="Mazur M."/>
            <person name="Goltsman E."/>
            <person name="Selkov E."/>
            <person name="Elzer P.H."/>
            <person name="Hagius S."/>
            <person name="O'Callaghan D."/>
            <person name="Letesson J.-J."/>
            <person name="Haselkorn R."/>
            <person name="Kyrpides N.C."/>
            <person name="Overbeek R."/>
        </authorList>
    </citation>
    <scope>NUCLEOTIDE SEQUENCE [LARGE SCALE GENOMIC DNA]</scope>
    <source>
        <strain>ATCC 23456 / CCUG 17765 / NCTC 10094 / 16M</strain>
    </source>
</reference>
<reference key="2">
    <citation type="journal article" date="2007" name="Science">
        <title>Blue-light-activated histidine kinases: two-component sensors in bacteria.</title>
        <authorList>
            <person name="Swartz T.E."/>
            <person name="Tseng T.-S."/>
            <person name="Frederickson M.A."/>
            <person name="Paris G."/>
            <person name="Comerci D.J."/>
            <person name="Rajashekara G."/>
            <person name="Kim J.-G."/>
            <person name="Mudgett M.B."/>
            <person name="Splitter G.A."/>
            <person name="Ugalde R.A."/>
            <person name="Goldbaum F.A."/>
            <person name="Briggs W.R."/>
            <person name="Bogomolni R.A."/>
        </authorList>
    </citation>
    <scope>FUNCTION IN LIGHT SENSING</scope>
    <scope>FLAVIN CHROMOPHORE</scope>
    <scope>ADDUCT STATE STABILITY</scope>
    <scope>KINASE ACTIVITY</scope>
    <scope>INDUCTION</scope>
    <scope>ROLE IN VIRULENCE</scope>
    <scope>MUTAGENESIS OF CYS-69</scope>
    <source>
        <strain>ATCC 23456 / CCUG 17765 / NCTC 10094 / 16M</strain>
    </source>
</reference>
<protein>
    <recommendedName>
        <fullName>Blue-light-activated histidine kinase</fullName>
        <ecNumber>2.7.13.3</ecNumber>
    </recommendedName>
    <alternativeName>
        <fullName>BM-LOV-histidine kinase</fullName>
        <shortName>BM-LOV-HK</shortName>
    </alternativeName>
</protein>
<keyword id="KW-0002">3D-structure</keyword>
<keyword id="KW-0067">ATP-binding</keyword>
<keyword id="KW-0157">Chromophore</keyword>
<keyword id="KW-0285">Flavoprotein</keyword>
<keyword id="KW-0288">FMN</keyword>
<keyword id="KW-0418">Kinase</keyword>
<keyword id="KW-0547">Nucleotide-binding</keyword>
<keyword id="KW-0597">Phosphoprotein</keyword>
<keyword id="KW-0600">Photoreceptor protein</keyword>
<keyword id="KW-0675">Receptor</keyword>
<keyword id="KW-0677">Repeat</keyword>
<keyword id="KW-0716">Sensory transduction</keyword>
<keyword id="KW-0808">Transferase</keyword>
<keyword id="KW-0843">Virulence</keyword>
<feature type="chain" id="PRO_0000361285" description="Blue-light-activated histidine kinase">
    <location>
        <begin position="1"/>
        <end position="489"/>
    </location>
</feature>
<feature type="domain" description="PAS" evidence="2">
    <location>
        <begin position="19"/>
        <end position="93"/>
    </location>
</feature>
<feature type="domain" description="PAC 1" evidence="3">
    <location>
        <begin position="93"/>
        <end position="147"/>
    </location>
</feature>
<feature type="domain" description="PAC 2" evidence="3">
    <location>
        <begin position="232"/>
        <end position="281"/>
    </location>
</feature>
<feature type="region of interest" description="HWE histidine kinase domain">
    <location>
        <begin position="285"/>
        <end position="367"/>
    </location>
</feature>
<feature type="modified residue" description="S-4a-FMN cysteine">
    <location>
        <position position="69"/>
    </location>
</feature>
<feature type="modified residue" description="Phosphohistidine; by autocatalysis" evidence="1">
    <location>
        <position position="288"/>
    </location>
</feature>
<feature type="mutagenesis site" description="No effect on FMN binding; loss of ability to form S-4a-FMN cysteine; loss of kinase activity." evidence="4">
    <original>C</original>
    <variation>A</variation>
    <location>
        <position position="69"/>
    </location>
</feature>
<feature type="helix" evidence="6">
    <location>
        <begin position="22"/>
        <end position="29"/>
    </location>
</feature>
<feature type="strand" evidence="5">
    <location>
        <begin position="34"/>
        <end position="37"/>
    </location>
</feature>
<feature type="strand" evidence="5">
    <location>
        <begin position="46"/>
        <end position="49"/>
    </location>
</feature>
<feature type="helix" evidence="5">
    <location>
        <begin position="51"/>
        <end position="57"/>
    </location>
</feature>
<feature type="helix" evidence="5">
    <location>
        <begin position="61"/>
        <end position="64"/>
    </location>
</feature>
<feature type="helix" evidence="5">
    <location>
        <begin position="69"/>
        <end position="72"/>
    </location>
</feature>
<feature type="helix" evidence="5">
    <location>
        <begin position="79"/>
        <end position="90"/>
    </location>
</feature>
<feature type="strand" evidence="5">
    <location>
        <begin position="95"/>
        <end position="102"/>
    </location>
</feature>
<feature type="strand" evidence="5">
    <location>
        <begin position="108"/>
        <end position="119"/>
    </location>
</feature>
<feature type="strand" evidence="5">
    <location>
        <begin position="125"/>
        <end position="134"/>
    </location>
</feature>
<feature type="helix" evidence="5">
    <location>
        <begin position="136"/>
        <end position="139"/>
    </location>
</feature>
<feature type="helix" evidence="7">
    <location>
        <begin position="141"/>
        <end position="169"/>
    </location>
</feature>
<feature type="strand" evidence="7">
    <location>
        <begin position="173"/>
        <end position="178"/>
    </location>
</feature>
<feature type="turn" evidence="7">
    <location>
        <begin position="179"/>
        <end position="181"/>
    </location>
</feature>
<feature type="strand" evidence="7">
    <location>
        <begin position="183"/>
        <end position="186"/>
    </location>
</feature>
<feature type="helix" evidence="7">
    <location>
        <begin position="188"/>
        <end position="193"/>
    </location>
</feature>
<feature type="helix" evidence="7">
    <location>
        <begin position="204"/>
        <end position="208"/>
    </location>
</feature>
<feature type="helix" evidence="7">
    <location>
        <begin position="213"/>
        <end position="224"/>
    </location>
</feature>
<feature type="helix" evidence="7">
    <location>
        <begin position="225"/>
        <end position="228"/>
    </location>
</feature>
<feature type="strand" evidence="7">
    <location>
        <begin position="232"/>
        <end position="239"/>
    </location>
</feature>
<feature type="strand" evidence="7">
    <location>
        <begin position="245"/>
        <end position="255"/>
    </location>
</feature>
<feature type="strand" evidence="7">
    <location>
        <begin position="257"/>
        <end position="259"/>
    </location>
</feature>
<feature type="strand" evidence="7">
    <location>
        <begin position="261"/>
        <end position="268"/>
    </location>
</feature>
<feature type="turn" evidence="8">
    <location>
        <begin position="270"/>
        <end position="272"/>
    </location>
</feature>
<feature type="helix" evidence="8">
    <location>
        <begin position="276"/>
        <end position="286"/>
    </location>
</feature>
<feature type="turn" evidence="8">
    <location>
        <begin position="287"/>
        <end position="290"/>
    </location>
</feature>
<feature type="helix" evidence="8">
    <location>
        <begin position="291"/>
        <end position="297"/>
    </location>
</feature>
<feature type="helix" evidence="8">
    <location>
        <begin position="298"/>
        <end position="303"/>
    </location>
</feature>
<feature type="strand" evidence="8">
    <location>
        <begin position="306"/>
        <end position="308"/>
    </location>
</feature>
<feature type="turn" evidence="8">
    <location>
        <begin position="311"/>
        <end position="322"/>
    </location>
</feature>
<feature type="helix" evidence="8">
    <location>
        <begin position="323"/>
        <end position="326"/>
    </location>
</feature>
<feature type="helix" evidence="8">
    <location>
        <begin position="331"/>
        <end position="333"/>
    </location>
</feature>
<feature type="turn" evidence="8">
    <location>
        <begin position="334"/>
        <end position="336"/>
    </location>
</feature>
<feature type="helix" evidence="8">
    <location>
        <begin position="342"/>
        <end position="348"/>
    </location>
</feature>
<feature type="turn" evidence="8">
    <location>
        <begin position="349"/>
        <end position="352"/>
    </location>
</feature>
<feature type="helix" evidence="8">
    <location>
        <begin position="353"/>
        <end position="356"/>
    </location>
</feature>
<feature type="turn" evidence="8">
    <location>
        <begin position="357"/>
        <end position="359"/>
    </location>
</feature>
<feature type="strand" evidence="8">
    <location>
        <begin position="361"/>
        <end position="364"/>
    </location>
</feature>
<feature type="helix" evidence="8">
    <location>
        <begin position="372"/>
        <end position="391"/>
    </location>
</feature>
<feature type="strand" evidence="8">
    <location>
        <begin position="396"/>
        <end position="399"/>
    </location>
</feature>
<feature type="strand" evidence="8">
    <location>
        <begin position="401"/>
        <end position="409"/>
    </location>
</feature>
<feature type="strand" evidence="8">
    <location>
        <begin position="411"/>
        <end position="414"/>
    </location>
</feature>
<feature type="strand" evidence="8">
    <location>
        <begin position="416"/>
        <end position="425"/>
    </location>
</feature>
<feature type="helix" evidence="8">
    <location>
        <begin position="438"/>
        <end position="441"/>
    </location>
</feature>
<feature type="turn" evidence="8">
    <location>
        <begin position="442"/>
        <end position="451"/>
    </location>
</feature>
<feature type="strand" evidence="8">
    <location>
        <begin position="455"/>
        <end position="458"/>
    </location>
</feature>
<feature type="strand" evidence="8">
    <location>
        <begin position="460"/>
        <end position="469"/>
    </location>
</feature>
<name>LOVHK_BRUME</name>
<comment type="function">
    <text evidence="4">Photosensitive kinase that is involved in increased bacterial virulence upon exposure to light. Once ejected from an infected animal host, sunlight acts as an environmental signal that increases the virulence of the bacterium, preparing it for infection of the next host. This photoreceptor protein is directly related to the bacterium's survival and replication within host macrophages.</text>
</comment>
<comment type="catalytic activity">
    <reaction>
        <text>ATP + protein L-histidine = ADP + protein N-phospho-L-histidine.</text>
        <dbReference type="EC" id="2.7.13.3"/>
    </reaction>
</comment>
<comment type="induction">
    <text evidence="4">Induced after invasion of host macrophages.</text>
</comment>
<comment type="PTM">
    <text>FMN binds covalently to cysteine after exposure to blue light and this bond is spontaneously broken in the dark. However, this protein presents an adduct state that is extremely and unusually stable and does not decay measurably in 2h.</text>
</comment>
<proteinExistence type="evidence at protein level"/>